<protein>
    <recommendedName>
        <fullName>CD63 antigen</fullName>
    </recommendedName>
    <cdAntigenName>CD63</cdAntigenName>
</protein>
<reference key="1">
    <citation type="journal article" date="2004" name="Vet. Immunol. Immunopathol.">
        <title>Identification of the feline CD63 homologue using retrovirus-mediated expression cloning.</title>
        <authorList>
            <person name="Sakurai Y."/>
            <person name="Shimojima M."/>
            <person name="Miyazawa T."/>
            <person name="Masuoka K."/>
            <person name="Tohya Y."/>
            <person name="Akashi H."/>
        </authorList>
    </citation>
    <scope>NUCLEOTIDE SEQUENCE [MRNA]</scope>
</reference>
<name>CD63_FELCA</name>
<accession>Q76B49</accession>
<comment type="function">
    <text evidence="1">Functions as a cell surface receptor for TIMP1 and plays a role in the activation of cellular signaling cascades. Plays a role in the activation of ITGB1 and integrin signaling, leading to the activation of AKT, FAK/PTK2 and MAP kinases. Promotes cell survival, reorganization of the actin cytoskeleton, cell adhesion, spreading and migration, via its role in the activation of AKT and FAK/PTK2. Plays a role in VEGFA signaling via its role in regulating the internalization of KDR/VEGFR2. Plays a role in intracellular vesicular transport processes, and is required for normal trafficking of the PMEL luminal domain that is essential for the development and maturation of melanocytes. Plays a role in the adhesion of leukocytes onto endothelial cells via its role in the regulation of SELP trafficking. May play a role in mast cell degranulation in response to Ms4a2/FceRI stimulation, but not in mast cell degranulation in response to other stimuli (By similarity).</text>
</comment>
<comment type="subunit">
    <text evidence="1 3">Interacts with TIMP1 and ITGB1 and recruits TIMP1 to ITGB1. Interacts with CD9. Identified in a complex with CD9 and ITGB3. Interacts with PMEL. Interacts with KDR/VEGFR2; identified in a complex with ITGB1 and KDR/VEGFR2 and is required to recruit KDR to ITGB1 complexes. Interacts with SYT7 (By similarity).</text>
</comment>
<comment type="subcellular location">
    <subcellularLocation>
        <location evidence="2">Cell membrane</location>
        <topology evidence="4">Multi-pass membrane protein</topology>
    </subcellularLocation>
    <subcellularLocation>
        <location evidence="2">Lysosome membrane</location>
        <topology evidence="4">Multi-pass membrane protein</topology>
    </subcellularLocation>
    <subcellularLocation>
        <location evidence="2">Late endosome membrane</location>
        <topology evidence="4">Multi-pass membrane protein</topology>
    </subcellularLocation>
    <subcellularLocation>
        <location evidence="2">Endosome</location>
        <location evidence="2">Multivesicular body</location>
    </subcellularLocation>
    <subcellularLocation>
        <location evidence="2">Melanosome</location>
    </subcellularLocation>
    <subcellularLocation>
        <location evidence="2">Secreted</location>
        <location evidence="2">Extracellular exosome</location>
    </subcellularLocation>
    <subcellularLocation>
        <location evidence="2">Cell surface</location>
    </subcellularLocation>
    <text evidence="2">Also found in Weibel-Palade bodies of endothelial cells. Located in platelet dense granules. Detected in a subset of pre-melanosomes. Detected on intralumenal vesicles (ILVs) within multivesicular bodies.</text>
</comment>
<comment type="PTM">
    <text evidence="1">Palmitoylated at a low, basal level in unstimulated platelets. The level of palmitoylation increases when platelets are activated by thrombin (in vitro) (By similarity).</text>
</comment>
<comment type="similarity">
    <text evidence="5">Belongs to the tetraspanin (TM4SF) family.</text>
</comment>
<dbReference type="EMBL" id="AB111914">
    <property type="protein sequence ID" value="BAD04070.1"/>
    <property type="molecule type" value="mRNA"/>
</dbReference>
<dbReference type="RefSeq" id="NP_001009855.1">
    <property type="nucleotide sequence ID" value="NM_001009855.1"/>
</dbReference>
<dbReference type="SMR" id="Q76B49"/>
<dbReference type="STRING" id="9685.ENSFCAP00000060961"/>
<dbReference type="GlyCosmos" id="Q76B49">
    <property type="glycosylation" value="3 sites, No reported glycans"/>
</dbReference>
<dbReference type="PaxDb" id="9685-ENSFCAP00000012946"/>
<dbReference type="GeneID" id="493846"/>
<dbReference type="KEGG" id="fca:493846"/>
<dbReference type="CTD" id="967"/>
<dbReference type="eggNOG" id="KOG3882">
    <property type="taxonomic scope" value="Eukaryota"/>
</dbReference>
<dbReference type="InParanoid" id="Q76B49"/>
<dbReference type="OrthoDB" id="10033535at2759"/>
<dbReference type="TreeFam" id="TF316345"/>
<dbReference type="Proteomes" id="UP000011712">
    <property type="component" value="Unplaced"/>
</dbReference>
<dbReference type="GO" id="GO:0009986">
    <property type="term" value="C:cell surface"/>
    <property type="evidence" value="ECO:0007669"/>
    <property type="project" value="UniProtKB-SubCell"/>
</dbReference>
<dbReference type="GO" id="GO:0005576">
    <property type="term" value="C:extracellular region"/>
    <property type="evidence" value="ECO:0007669"/>
    <property type="project" value="UniProtKB-SubCell"/>
</dbReference>
<dbReference type="GO" id="GO:0031902">
    <property type="term" value="C:late endosome membrane"/>
    <property type="evidence" value="ECO:0000250"/>
    <property type="project" value="UniProtKB"/>
</dbReference>
<dbReference type="GO" id="GO:0005765">
    <property type="term" value="C:lysosomal membrane"/>
    <property type="evidence" value="ECO:0000250"/>
    <property type="project" value="UniProtKB"/>
</dbReference>
<dbReference type="GO" id="GO:0042470">
    <property type="term" value="C:melanosome"/>
    <property type="evidence" value="ECO:0007669"/>
    <property type="project" value="UniProtKB-SubCell"/>
</dbReference>
<dbReference type="GO" id="GO:0032585">
    <property type="term" value="C:multivesicular body membrane"/>
    <property type="evidence" value="ECO:0000250"/>
    <property type="project" value="UniProtKB"/>
</dbReference>
<dbReference type="GO" id="GO:0097487">
    <property type="term" value="C:multivesicular body, internal vesicle"/>
    <property type="evidence" value="ECO:0000250"/>
    <property type="project" value="UniProtKB"/>
</dbReference>
<dbReference type="GO" id="GO:0005886">
    <property type="term" value="C:plasma membrane"/>
    <property type="evidence" value="ECO:0000250"/>
    <property type="project" value="UniProtKB"/>
</dbReference>
<dbReference type="GO" id="GO:0016477">
    <property type="term" value="P:cell migration"/>
    <property type="evidence" value="ECO:0000250"/>
    <property type="project" value="UniProtKB"/>
</dbReference>
<dbReference type="GO" id="GO:0007160">
    <property type="term" value="P:cell-matrix adhesion"/>
    <property type="evidence" value="ECO:0000250"/>
    <property type="project" value="UniProtKB"/>
</dbReference>
<dbReference type="GO" id="GO:0035646">
    <property type="term" value="P:endosome to melanosome transport"/>
    <property type="evidence" value="ECO:0000250"/>
    <property type="project" value="UniProtKB"/>
</dbReference>
<dbReference type="GO" id="GO:0048757">
    <property type="term" value="P:pigment granule maturation"/>
    <property type="evidence" value="ECO:0000250"/>
    <property type="project" value="UniProtKB"/>
</dbReference>
<dbReference type="GO" id="GO:2001046">
    <property type="term" value="P:positive regulation of integrin-mediated signaling pathway"/>
    <property type="evidence" value="ECO:0000250"/>
    <property type="project" value="UniProtKB"/>
</dbReference>
<dbReference type="GO" id="GO:0002092">
    <property type="term" value="P:positive regulation of receptor internalization"/>
    <property type="evidence" value="ECO:0000250"/>
    <property type="project" value="UniProtKB"/>
</dbReference>
<dbReference type="GO" id="GO:0015031">
    <property type="term" value="P:protein transport"/>
    <property type="evidence" value="ECO:0007669"/>
    <property type="project" value="UniProtKB-KW"/>
</dbReference>
<dbReference type="GO" id="GO:1900746">
    <property type="term" value="P:regulation of vascular endothelial growth factor signaling pathway"/>
    <property type="evidence" value="ECO:0000250"/>
    <property type="project" value="UniProtKB"/>
</dbReference>
<dbReference type="CDD" id="cd03166">
    <property type="entry name" value="CD63_LEL"/>
    <property type="match status" value="1"/>
</dbReference>
<dbReference type="FunFam" id="1.10.1450.10:FF:000019">
    <property type="entry name" value="Tetraspanin"/>
    <property type="match status" value="1"/>
</dbReference>
<dbReference type="Gene3D" id="1.10.1450.10">
    <property type="entry name" value="Tetraspanin"/>
    <property type="match status" value="1"/>
</dbReference>
<dbReference type="InterPro" id="IPR042028">
    <property type="entry name" value="CD63_LEL"/>
</dbReference>
<dbReference type="InterPro" id="IPR018499">
    <property type="entry name" value="Tetraspanin/Peripherin"/>
</dbReference>
<dbReference type="InterPro" id="IPR000301">
    <property type="entry name" value="Tetraspanin_animals"/>
</dbReference>
<dbReference type="InterPro" id="IPR018503">
    <property type="entry name" value="Tetraspanin_CS"/>
</dbReference>
<dbReference type="InterPro" id="IPR008952">
    <property type="entry name" value="Tetraspanin_EC2_sf"/>
</dbReference>
<dbReference type="PANTHER" id="PTHR19282:SF471">
    <property type="entry name" value="CD63 ANTIGEN"/>
    <property type="match status" value="1"/>
</dbReference>
<dbReference type="PANTHER" id="PTHR19282">
    <property type="entry name" value="TETRASPANIN"/>
    <property type="match status" value="1"/>
</dbReference>
<dbReference type="Pfam" id="PF00335">
    <property type="entry name" value="Tetraspanin"/>
    <property type="match status" value="1"/>
</dbReference>
<dbReference type="PIRSF" id="PIRSF002419">
    <property type="entry name" value="Tetraspanin"/>
    <property type="match status" value="1"/>
</dbReference>
<dbReference type="PRINTS" id="PR00259">
    <property type="entry name" value="TMFOUR"/>
</dbReference>
<dbReference type="SUPFAM" id="SSF48652">
    <property type="entry name" value="Tetraspanin"/>
    <property type="match status" value="1"/>
</dbReference>
<dbReference type="PROSITE" id="PS00421">
    <property type="entry name" value="TM4_1"/>
    <property type="match status" value="1"/>
</dbReference>
<sequence length="238" mass="25638">MAVEGGMKCVKFLLYVLLLAFCACAVGLIAVGVGAQLVLRQTIVQGATPGSLLPVVIIAVGAFLFLVAFVGCCGACKENYCLMVTFAIFLSLIMLVEVAVAIAGYVFRDKVMSEFNKDFRQQMQNYPKNNHTVSIVDRMQEDFKCCGAANYTDWGSIPLMSKARVPDSCCVNVTQGCGISFKVKEIHEEGCVEKIGGWLRSNVLVVAAAALGIAFVEVLGIIFACCLVKSIRSGYEVM</sequence>
<proteinExistence type="evidence at transcript level"/>
<feature type="chain" id="PRO_0000226734" description="CD63 antigen">
    <location>
        <begin position="1"/>
        <end position="238"/>
    </location>
</feature>
<feature type="topological domain" description="Cytoplasmic" evidence="4">
    <location>
        <begin position="1"/>
        <end position="11"/>
    </location>
</feature>
<feature type="transmembrane region" description="Helical" evidence="4">
    <location>
        <begin position="12"/>
        <end position="32"/>
    </location>
</feature>
<feature type="topological domain" description="Extracellular" evidence="4">
    <location>
        <begin position="33"/>
        <end position="51"/>
    </location>
</feature>
<feature type="transmembrane region" description="Helical" evidence="4">
    <location>
        <begin position="52"/>
        <end position="72"/>
    </location>
</feature>
<feature type="topological domain" description="Cytoplasmic" evidence="4">
    <location>
        <begin position="73"/>
        <end position="81"/>
    </location>
</feature>
<feature type="transmembrane region" description="Helical" evidence="4">
    <location>
        <begin position="82"/>
        <end position="102"/>
    </location>
</feature>
<feature type="topological domain" description="Extracellular" evidence="4">
    <location>
        <begin position="103"/>
        <end position="202"/>
    </location>
</feature>
<feature type="transmembrane region" description="Helical" evidence="4">
    <location>
        <begin position="203"/>
        <end position="223"/>
    </location>
</feature>
<feature type="topological domain" description="Cytoplasmic" evidence="4">
    <location>
        <begin position="224"/>
        <end position="238"/>
    </location>
</feature>
<feature type="short sequence motif" description="Lysosomal targeting motif" evidence="3">
    <location>
        <begin position="234"/>
        <end position="238"/>
    </location>
</feature>
<feature type="glycosylation site" description="N-linked (GlcNAc...) asparagine" evidence="4">
    <location>
        <position position="130"/>
    </location>
</feature>
<feature type="glycosylation site" description="N-linked (GlcNAc...) asparagine" evidence="4">
    <location>
        <position position="150"/>
    </location>
</feature>
<feature type="glycosylation site" description="N-linked (GlcNAc...) asparagine" evidence="4">
    <location>
        <position position="172"/>
    </location>
</feature>
<keyword id="KW-1003">Cell membrane</keyword>
<keyword id="KW-0967">Endosome</keyword>
<keyword id="KW-0325">Glycoprotein</keyword>
<keyword id="KW-0449">Lipoprotein</keyword>
<keyword id="KW-0458">Lysosome</keyword>
<keyword id="KW-0472">Membrane</keyword>
<keyword id="KW-0564">Palmitate</keyword>
<keyword id="KW-0653">Protein transport</keyword>
<keyword id="KW-1185">Reference proteome</keyword>
<keyword id="KW-0964">Secreted</keyword>
<keyword id="KW-0812">Transmembrane</keyword>
<keyword id="KW-1133">Transmembrane helix</keyword>
<keyword id="KW-0813">Transport</keyword>
<evidence type="ECO:0000250" key="1"/>
<evidence type="ECO:0000250" key="2">
    <source>
        <dbReference type="UniProtKB" id="P08962"/>
    </source>
</evidence>
<evidence type="ECO:0000250" key="3">
    <source>
        <dbReference type="UniProtKB" id="P41731"/>
    </source>
</evidence>
<evidence type="ECO:0000255" key="4"/>
<evidence type="ECO:0000305" key="5"/>
<organism>
    <name type="scientific">Felis catus</name>
    <name type="common">Cat</name>
    <name type="synonym">Felis silvestris catus</name>
    <dbReference type="NCBI Taxonomy" id="9685"/>
    <lineage>
        <taxon>Eukaryota</taxon>
        <taxon>Metazoa</taxon>
        <taxon>Chordata</taxon>
        <taxon>Craniata</taxon>
        <taxon>Vertebrata</taxon>
        <taxon>Euteleostomi</taxon>
        <taxon>Mammalia</taxon>
        <taxon>Eutheria</taxon>
        <taxon>Laurasiatheria</taxon>
        <taxon>Carnivora</taxon>
        <taxon>Feliformia</taxon>
        <taxon>Felidae</taxon>
        <taxon>Felinae</taxon>
        <taxon>Felis</taxon>
    </lineage>
</organism>
<gene>
    <name type="primary">CD63</name>
</gene>